<feature type="chain" id="PRO_0000105069" description="Integration host factor subunit beta">
    <location>
        <begin position="1"/>
        <end position="94"/>
    </location>
</feature>
<comment type="function">
    <text evidence="1">This protein is one of the two subunits of integration host factor, a specific DNA-binding protein that functions in genetic recombination as well as in transcriptional and translational control.</text>
</comment>
<comment type="subunit">
    <text evidence="1">Heterodimer of an alpha and a beta chain.</text>
</comment>
<comment type="similarity">
    <text evidence="1">Belongs to the bacterial histone-like protein family.</text>
</comment>
<evidence type="ECO:0000255" key="1">
    <source>
        <dbReference type="HAMAP-Rule" id="MF_00381"/>
    </source>
</evidence>
<organism>
    <name type="scientific">Salmonella typhi</name>
    <dbReference type="NCBI Taxonomy" id="90370"/>
    <lineage>
        <taxon>Bacteria</taxon>
        <taxon>Pseudomonadati</taxon>
        <taxon>Pseudomonadota</taxon>
        <taxon>Gammaproteobacteria</taxon>
        <taxon>Enterobacterales</taxon>
        <taxon>Enterobacteriaceae</taxon>
        <taxon>Salmonella</taxon>
    </lineage>
</organism>
<keyword id="KW-0233">DNA recombination</keyword>
<keyword id="KW-0238">DNA-binding</keyword>
<keyword id="KW-0804">Transcription</keyword>
<keyword id="KW-0805">Transcription regulation</keyword>
<keyword id="KW-0810">Translation regulation</keyword>
<proteinExistence type="inferred from homology"/>
<gene>
    <name evidence="1" type="primary">ihfB</name>
    <name evidence="1" type="synonym">himD</name>
    <name type="ordered locus">STY0982</name>
    <name type="ordered locus">t1952</name>
</gene>
<sequence length="94" mass="10621">MTKSELIERLATQQSHIPAKAVEDAVKEMLEHMASTLAQGERIEIRGFGSFSLHYRAPRTGRNPKTGDKVELEGKYVPHFKPGKELRDRANIYG</sequence>
<name>IHFB_SALTI</name>
<dbReference type="EMBL" id="AL513382">
    <property type="protein sequence ID" value="CAD05382.1"/>
    <property type="molecule type" value="Genomic_DNA"/>
</dbReference>
<dbReference type="EMBL" id="AE014613">
    <property type="protein sequence ID" value="AAO69566.1"/>
    <property type="molecule type" value="Genomic_DNA"/>
</dbReference>
<dbReference type="RefSeq" id="NP_455469.1">
    <property type="nucleotide sequence ID" value="NC_003198.1"/>
</dbReference>
<dbReference type="RefSeq" id="WP_000167332.1">
    <property type="nucleotide sequence ID" value="NZ_WSUR01000013.1"/>
</dbReference>
<dbReference type="SMR" id="P64395"/>
<dbReference type="STRING" id="220341.gene:17584973"/>
<dbReference type="GeneID" id="84237116"/>
<dbReference type="KEGG" id="stt:t1952"/>
<dbReference type="KEGG" id="sty:STY0982"/>
<dbReference type="PATRIC" id="fig|220341.7.peg.991"/>
<dbReference type="eggNOG" id="COG0776">
    <property type="taxonomic scope" value="Bacteria"/>
</dbReference>
<dbReference type="HOGENOM" id="CLU_105066_2_0_6"/>
<dbReference type="OMA" id="DQKSVPF"/>
<dbReference type="OrthoDB" id="9804203at2"/>
<dbReference type="Proteomes" id="UP000000541">
    <property type="component" value="Chromosome"/>
</dbReference>
<dbReference type="Proteomes" id="UP000002670">
    <property type="component" value="Chromosome"/>
</dbReference>
<dbReference type="GO" id="GO:0005694">
    <property type="term" value="C:chromosome"/>
    <property type="evidence" value="ECO:0007669"/>
    <property type="project" value="InterPro"/>
</dbReference>
<dbReference type="GO" id="GO:0005829">
    <property type="term" value="C:cytosol"/>
    <property type="evidence" value="ECO:0007669"/>
    <property type="project" value="TreeGrafter"/>
</dbReference>
<dbReference type="GO" id="GO:0003677">
    <property type="term" value="F:DNA binding"/>
    <property type="evidence" value="ECO:0007669"/>
    <property type="project" value="UniProtKB-UniRule"/>
</dbReference>
<dbReference type="GO" id="GO:0030527">
    <property type="term" value="F:structural constituent of chromatin"/>
    <property type="evidence" value="ECO:0007669"/>
    <property type="project" value="InterPro"/>
</dbReference>
<dbReference type="GO" id="GO:0006310">
    <property type="term" value="P:DNA recombination"/>
    <property type="evidence" value="ECO:0007669"/>
    <property type="project" value="UniProtKB-UniRule"/>
</dbReference>
<dbReference type="GO" id="GO:0006355">
    <property type="term" value="P:regulation of DNA-templated transcription"/>
    <property type="evidence" value="ECO:0007669"/>
    <property type="project" value="UniProtKB-UniRule"/>
</dbReference>
<dbReference type="GO" id="GO:0006417">
    <property type="term" value="P:regulation of translation"/>
    <property type="evidence" value="ECO:0007669"/>
    <property type="project" value="UniProtKB-UniRule"/>
</dbReference>
<dbReference type="CDD" id="cd13836">
    <property type="entry name" value="IHF_B"/>
    <property type="match status" value="1"/>
</dbReference>
<dbReference type="FunFam" id="4.10.520.10:FF:000003">
    <property type="entry name" value="Integration host factor subunit beta"/>
    <property type="match status" value="1"/>
</dbReference>
<dbReference type="Gene3D" id="4.10.520.10">
    <property type="entry name" value="IHF-like DNA-binding proteins"/>
    <property type="match status" value="1"/>
</dbReference>
<dbReference type="HAMAP" id="MF_00381">
    <property type="entry name" value="IHF_beta"/>
    <property type="match status" value="1"/>
</dbReference>
<dbReference type="InterPro" id="IPR000119">
    <property type="entry name" value="Hist_DNA-bd"/>
</dbReference>
<dbReference type="InterPro" id="IPR020816">
    <property type="entry name" value="Histone-like_DNA-bd_CS"/>
</dbReference>
<dbReference type="InterPro" id="IPR010992">
    <property type="entry name" value="IHF-like_DNA-bd_dom_sf"/>
</dbReference>
<dbReference type="InterPro" id="IPR005685">
    <property type="entry name" value="IHF_beta"/>
</dbReference>
<dbReference type="NCBIfam" id="TIGR00988">
    <property type="entry name" value="hip"/>
    <property type="match status" value="1"/>
</dbReference>
<dbReference type="NCBIfam" id="NF001222">
    <property type="entry name" value="PRK00199.1"/>
    <property type="match status" value="1"/>
</dbReference>
<dbReference type="PANTHER" id="PTHR33175">
    <property type="entry name" value="DNA-BINDING PROTEIN HU"/>
    <property type="match status" value="1"/>
</dbReference>
<dbReference type="PANTHER" id="PTHR33175:SF5">
    <property type="entry name" value="INTEGRATION HOST FACTOR SUBUNIT BETA"/>
    <property type="match status" value="1"/>
</dbReference>
<dbReference type="Pfam" id="PF00216">
    <property type="entry name" value="Bac_DNA_binding"/>
    <property type="match status" value="1"/>
</dbReference>
<dbReference type="PRINTS" id="PR01727">
    <property type="entry name" value="DNABINDINGHU"/>
</dbReference>
<dbReference type="SMART" id="SM00411">
    <property type="entry name" value="BHL"/>
    <property type="match status" value="1"/>
</dbReference>
<dbReference type="SUPFAM" id="SSF47729">
    <property type="entry name" value="IHF-like DNA-binding proteins"/>
    <property type="match status" value="1"/>
</dbReference>
<dbReference type="PROSITE" id="PS00045">
    <property type="entry name" value="HISTONE_LIKE"/>
    <property type="match status" value="1"/>
</dbReference>
<reference key="1">
    <citation type="journal article" date="2001" name="Nature">
        <title>Complete genome sequence of a multiple drug resistant Salmonella enterica serovar Typhi CT18.</title>
        <authorList>
            <person name="Parkhill J."/>
            <person name="Dougan G."/>
            <person name="James K.D."/>
            <person name="Thomson N.R."/>
            <person name="Pickard D."/>
            <person name="Wain J."/>
            <person name="Churcher C.M."/>
            <person name="Mungall K.L."/>
            <person name="Bentley S.D."/>
            <person name="Holden M.T.G."/>
            <person name="Sebaihia M."/>
            <person name="Baker S."/>
            <person name="Basham D."/>
            <person name="Brooks K."/>
            <person name="Chillingworth T."/>
            <person name="Connerton P."/>
            <person name="Cronin A."/>
            <person name="Davis P."/>
            <person name="Davies R.M."/>
            <person name="Dowd L."/>
            <person name="White N."/>
            <person name="Farrar J."/>
            <person name="Feltwell T."/>
            <person name="Hamlin N."/>
            <person name="Haque A."/>
            <person name="Hien T.T."/>
            <person name="Holroyd S."/>
            <person name="Jagels K."/>
            <person name="Krogh A."/>
            <person name="Larsen T.S."/>
            <person name="Leather S."/>
            <person name="Moule S."/>
            <person name="O'Gaora P."/>
            <person name="Parry C."/>
            <person name="Quail M.A."/>
            <person name="Rutherford K.M."/>
            <person name="Simmonds M."/>
            <person name="Skelton J."/>
            <person name="Stevens K."/>
            <person name="Whitehead S."/>
            <person name="Barrell B.G."/>
        </authorList>
    </citation>
    <scope>NUCLEOTIDE SEQUENCE [LARGE SCALE GENOMIC DNA]</scope>
    <source>
        <strain>CT18</strain>
    </source>
</reference>
<reference key="2">
    <citation type="journal article" date="2003" name="J. Bacteriol.">
        <title>Comparative genomics of Salmonella enterica serovar Typhi strains Ty2 and CT18.</title>
        <authorList>
            <person name="Deng W."/>
            <person name="Liou S.-R."/>
            <person name="Plunkett G. III"/>
            <person name="Mayhew G.F."/>
            <person name="Rose D.J."/>
            <person name="Burland V."/>
            <person name="Kodoyianni V."/>
            <person name="Schwartz D.C."/>
            <person name="Blattner F.R."/>
        </authorList>
    </citation>
    <scope>NUCLEOTIDE SEQUENCE [LARGE SCALE GENOMIC DNA]</scope>
    <source>
        <strain>ATCC 700931 / Ty2</strain>
    </source>
</reference>
<accession>P64395</accession>
<accession>Q8XFX6</accession>
<protein>
    <recommendedName>
        <fullName evidence="1">Integration host factor subunit beta</fullName>
        <shortName evidence="1">IHF-beta</shortName>
    </recommendedName>
</protein>